<accession>Q1C0J9</accession>
<comment type="function">
    <text evidence="1">Acts as a chaperone.</text>
</comment>
<comment type="induction">
    <text evidence="1">By stress conditions e.g. heat shock.</text>
</comment>
<comment type="similarity">
    <text evidence="1">Belongs to the heat shock protein 70 family.</text>
</comment>
<dbReference type="EMBL" id="CP000308">
    <property type="protein sequence ID" value="ABG16023.1"/>
    <property type="molecule type" value="Genomic_DNA"/>
</dbReference>
<dbReference type="RefSeq" id="WP_002209248.1">
    <property type="nucleotide sequence ID" value="NZ_CP009906.1"/>
</dbReference>
<dbReference type="SMR" id="Q1C0J9"/>
<dbReference type="GeneID" id="57974141"/>
<dbReference type="KEGG" id="ypa:YPA_4062"/>
<dbReference type="Proteomes" id="UP000001971">
    <property type="component" value="Chromosome"/>
</dbReference>
<dbReference type="GO" id="GO:0005524">
    <property type="term" value="F:ATP binding"/>
    <property type="evidence" value="ECO:0007669"/>
    <property type="project" value="UniProtKB-UniRule"/>
</dbReference>
<dbReference type="GO" id="GO:0140662">
    <property type="term" value="F:ATP-dependent protein folding chaperone"/>
    <property type="evidence" value="ECO:0007669"/>
    <property type="project" value="InterPro"/>
</dbReference>
<dbReference type="GO" id="GO:0051082">
    <property type="term" value="F:unfolded protein binding"/>
    <property type="evidence" value="ECO:0007669"/>
    <property type="project" value="InterPro"/>
</dbReference>
<dbReference type="CDD" id="cd10234">
    <property type="entry name" value="ASKHA_NBD_HSP70_DnaK-like"/>
    <property type="match status" value="1"/>
</dbReference>
<dbReference type="FunFam" id="2.60.34.10:FF:000014">
    <property type="entry name" value="Chaperone protein DnaK HSP70"/>
    <property type="match status" value="1"/>
</dbReference>
<dbReference type="FunFam" id="3.30.30.30:FF:000003">
    <property type="entry name" value="Heat shock protein 9"/>
    <property type="match status" value="1"/>
</dbReference>
<dbReference type="FunFam" id="1.20.1270.10:FF:000001">
    <property type="entry name" value="Molecular chaperone DnaK"/>
    <property type="match status" value="1"/>
</dbReference>
<dbReference type="FunFam" id="3.30.420.40:FF:000004">
    <property type="entry name" value="Molecular chaperone DnaK"/>
    <property type="match status" value="1"/>
</dbReference>
<dbReference type="FunFam" id="3.90.640.10:FF:000003">
    <property type="entry name" value="Molecular chaperone DnaK"/>
    <property type="match status" value="1"/>
</dbReference>
<dbReference type="Gene3D" id="1.20.1270.10">
    <property type="match status" value="1"/>
</dbReference>
<dbReference type="Gene3D" id="3.30.420.40">
    <property type="match status" value="2"/>
</dbReference>
<dbReference type="Gene3D" id="3.90.640.10">
    <property type="entry name" value="Actin, Chain A, domain 4"/>
    <property type="match status" value="1"/>
</dbReference>
<dbReference type="Gene3D" id="2.60.34.10">
    <property type="entry name" value="Substrate Binding Domain Of DNAk, Chain A, domain 1"/>
    <property type="match status" value="1"/>
</dbReference>
<dbReference type="HAMAP" id="MF_00332">
    <property type="entry name" value="DnaK"/>
    <property type="match status" value="1"/>
</dbReference>
<dbReference type="InterPro" id="IPR043129">
    <property type="entry name" value="ATPase_NBD"/>
</dbReference>
<dbReference type="InterPro" id="IPR012725">
    <property type="entry name" value="Chaperone_DnaK"/>
</dbReference>
<dbReference type="InterPro" id="IPR018181">
    <property type="entry name" value="Heat_shock_70_CS"/>
</dbReference>
<dbReference type="InterPro" id="IPR029048">
    <property type="entry name" value="HSP70_C_sf"/>
</dbReference>
<dbReference type="InterPro" id="IPR029047">
    <property type="entry name" value="HSP70_peptide-bd_sf"/>
</dbReference>
<dbReference type="InterPro" id="IPR013126">
    <property type="entry name" value="Hsp_70_fam"/>
</dbReference>
<dbReference type="NCBIfam" id="NF001413">
    <property type="entry name" value="PRK00290.1"/>
    <property type="match status" value="1"/>
</dbReference>
<dbReference type="NCBIfam" id="NF003520">
    <property type="entry name" value="PRK05183.1"/>
    <property type="match status" value="1"/>
</dbReference>
<dbReference type="NCBIfam" id="TIGR02350">
    <property type="entry name" value="prok_dnaK"/>
    <property type="match status" value="1"/>
</dbReference>
<dbReference type="PANTHER" id="PTHR19375">
    <property type="entry name" value="HEAT SHOCK PROTEIN 70KDA"/>
    <property type="match status" value="1"/>
</dbReference>
<dbReference type="Pfam" id="PF00012">
    <property type="entry name" value="HSP70"/>
    <property type="match status" value="1"/>
</dbReference>
<dbReference type="PRINTS" id="PR00301">
    <property type="entry name" value="HEATSHOCK70"/>
</dbReference>
<dbReference type="SUPFAM" id="SSF53067">
    <property type="entry name" value="Actin-like ATPase domain"/>
    <property type="match status" value="2"/>
</dbReference>
<dbReference type="SUPFAM" id="SSF100934">
    <property type="entry name" value="Heat shock protein 70kD (HSP70), C-terminal subdomain"/>
    <property type="match status" value="1"/>
</dbReference>
<dbReference type="SUPFAM" id="SSF100920">
    <property type="entry name" value="Heat shock protein 70kD (HSP70), peptide-binding domain"/>
    <property type="match status" value="1"/>
</dbReference>
<dbReference type="PROSITE" id="PS00297">
    <property type="entry name" value="HSP70_1"/>
    <property type="match status" value="1"/>
</dbReference>
<dbReference type="PROSITE" id="PS00329">
    <property type="entry name" value="HSP70_2"/>
    <property type="match status" value="1"/>
</dbReference>
<dbReference type="PROSITE" id="PS01036">
    <property type="entry name" value="HSP70_3"/>
    <property type="match status" value="1"/>
</dbReference>
<feature type="chain" id="PRO_1000059701" description="Chaperone protein DnaK">
    <location>
        <begin position="1"/>
        <end position="636"/>
    </location>
</feature>
<feature type="region of interest" description="Disordered" evidence="2">
    <location>
        <begin position="603"/>
        <end position="636"/>
    </location>
</feature>
<feature type="modified residue" description="Phosphothreonine; by autocatalysis" evidence="1">
    <location>
        <position position="199"/>
    </location>
</feature>
<keyword id="KW-0067">ATP-binding</keyword>
<keyword id="KW-0143">Chaperone</keyword>
<keyword id="KW-0547">Nucleotide-binding</keyword>
<keyword id="KW-0597">Phosphoprotein</keyword>
<keyword id="KW-0346">Stress response</keyword>
<organism>
    <name type="scientific">Yersinia pestis bv. Antiqua (strain Antiqua)</name>
    <dbReference type="NCBI Taxonomy" id="360102"/>
    <lineage>
        <taxon>Bacteria</taxon>
        <taxon>Pseudomonadati</taxon>
        <taxon>Pseudomonadota</taxon>
        <taxon>Gammaproteobacteria</taxon>
        <taxon>Enterobacterales</taxon>
        <taxon>Yersiniaceae</taxon>
        <taxon>Yersinia</taxon>
    </lineage>
</organism>
<sequence>MGKIIGIDLGTTNSCVAIMDGTKARVLENSEGDRTTPSIIAYTQDGETLVGQPAKRQAVTNPQNTLFAIKRLIGRRFQDEEAQRDKDIMPYKIIAADNGDAWLEVKGQKMAPPQISAEVLKKMKKTAEDYLGEPVTEAVITVPAYFNDAQRQATKDAGRIAGLEVKRIINEPTAAALAYGLDKEVGNRTIAVYDLGGGTFDISIIEIDEVDGEKTFEVLATNGDTHLGGEDFDSRLINYLVEEFKKDQGMDLRTDPLAMQRLKEAAEKAKIELSSAQQTDVNLPYITADGSGPKHMNIKVTRAKLESLVEDLVNRSIEPLKVALQDAGLSVSDIQDVILVGGQTRMPMVQKKVADFFGKEPRKDVNPDEAVAIGAAVQGGVLSGEVKDVLLLDVTPLSLGIETMGGVMTPLITKNTTIPTKHSQVFSTAEDNQSAVTIHVLQGERKRAQDNKSLGQFNLDGIQPAPRGMAQIEVTFDIDADGILHVSAKDKNTGREQKITIKASSGLNEEEIQKMVRDAEANAEADRKFEELVQTRNQADHLIHGTRKQLEEAGDKLPAEDKTAIEEAMKGLEAALKGEDKAEIEAKTQALVQVSGKLLEMAQQQQAAAGGDAGDTSAKKEDDVVDAEFEEVKDKK</sequence>
<evidence type="ECO:0000255" key="1">
    <source>
        <dbReference type="HAMAP-Rule" id="MF_00332"/>
    </source>
</evidence>
<evidence type="ECO:0000256" key="2">
    <source>
        <dbReference type="SAM" id="MobiDB-lite"/>
    </source>
</evidence>
<protein>
    <recommendedName>
        <fullName evidence="1">Chaperone protein DnaK</fullName>
    </recommendedName>
    <alternativeName>
        <fullName evidence="1">HSP70</fullName>
    </alternativeName>
    <alternativeName>
        <fullName evidence="1">Heat shock 70 kDa protein</fullName>
    </alternativeName>
    <alternativeName>
        <fullName evidence="1">Heat shock protein 70</fullName>
    </alternativeName>
</protein>
<proteinExistence type="inferred from homology"/>
<gene>
    <name evidence="1" type="primary">dnaK</name>
    <name type="ordered locus">YPA_4062</name>
</gene>
<reference key="1">
    <citation type="journal article" date="2006" name="J. Bacteriol.">
        <title>Complete genome sequence of Yersinia pestis strains Antiqua and Nepal516: evidence of gene reduction in an emerging pathogen.</title>
        <authorList>
            <person name="Chain P.S.G."/>
            <person name="Hu P."/>
            <person name="Malfatti S.A."/>
            <person name="Radnedge L."/>
            <person name="Larimer F."/>
            <person name="Vergez L.M."/>
            <person name="Worsham P."/>
            <person name="Chu M.C."/>
            <person name="Andersen G.L."/>
        </authorList>
    </citation>
    <scope>NUCLEOTIDE SEQUENCE [LARGE SCALE GENOMIC DNA]</scope>
    <source>
        <strain>Antiqua</strain>
    </source>
</reference>
<name>DNAK_YERPA</name>